<keyword id="KW-0456">Lyase</keyword>
<keyword id="KW-0663">Pyridoxal phosphate</keyword>
<keyword id="KW-0704">Schiff base</keyword>
<name>PDXS_FRATO</name>
<proteinExistence type="inferred from homology"/>
<gene>
    <name evidence="1" type="primary">pdxS</name>
    <name type="ordered locus">FTH_1496</name>
</gene>
<evidence type="ECO:0000255" key="1">
    <source>
        <dbReference type="HAMAP-Rule" id="MF_01824"/>
    </source>
</evidence>
<comment type="function">
    <text evidence="1">Catalyzes the formation of pyridoxal 5'-phosphate from ribose 5-phosphate (RBP), glyceraldehyde 3-phosphate (G3P) and ammonia. The ammonia is provided by the PdxT subunit. Can also use ribulose 5-phosphate and dihydroxyacetone phosphate as substrates, resulting from enzyme-catalyzed isomerization of RBP and G3P, respectively.</text>
</comment>
<comment type="catalytic activity">
    <reaction evidence="1">
        <text>aldehydo-D-ribose 5-phosphate + D-glyceraldehyde 3-phosphate + L-glutamine = pyridoxal 5'-phosphate + L-glutamate + phosphate + 3 H2O + H(+)</text>
        <dbReference type="Rhea" id="RHEA:31507"/>
        <dbReference type="ChEBI" id="CHEBI:15377"/>
        <dbReference type="ChEBI" id="CHEBI:15378"/>
        <dbReference type="ChEBI" id="CHEBI:29985"/>
        <dbReference type="ChEBI" id="CHEBI:43474"/>
        <dbReference type="ChEBI" id="CHEBI:58273"/>
        <dbReference type="ChEBI" id="CHEBI:58359"/>
        <dbReference type="ChEBI" id="CHEBI:59776"/>
        <dbReference type="ChEBI" id="CHEBI:597326"/>
        <dbReference type="EC" id="4.3.3.6"/>
    </reaction>
</comment>
<comment type="pathway">
    <text evidence="1">Cofactor biosynthesis; pyridoxal 5'-phosphate biosynthesis.</text>
</comment>
<comment type="subunit">
    <text evidence="1">In the presence of PdxT, forms a dodecamer of heterodimers.</text>
</comment>
<comment type="similarity">
    <text evidence="1">Belongs to the PdxS/SNZ family.</text>
</comment>
<sequence length="287" mass="30819">MSDINIKIGLAEMLKGGVIMDVVNAEQAEIAQQAGAVAVMALERVPADIRKDGGIARMSDPKLIKEIMSVVSIPVMAKARIGHFVEAQILESLGVDFIDESEVLTPADELNHIDKDSFKVPFVCGCTNLGEALRRIGEGAALIRTKGEAGTGNIVEAVRQLRQVNKDINYIKNADKSELMAIAKNLQAPYDLVTYVHKNGKLPVPNFSAGGVATPADAALMMQLGAESVFVGSGIFKSADPLKRARAIVSAVTYYNDAKILAEVSEDLGEPMTGINCDFEKFSQRGW</sequence>
<accession>Q0BKT2</accession>
<protein>
    <recommendedName>
        <fullName evidence="1">Pyridoxal 5'-phosphate synthase subunit PdxS</fullName>
        <shortName evidence="1">PLP synthase subunit PdxS</shortName>
        <ecNumber evidence="1">4.3.3.6</ecNumber>
    </recommendedName>
    <alternativeName>
        <fullName evidence="1">Pdx1</fullName>
    </alternativeName>
</protein>
<reference key="1">
    <citation type="journal article" date="2006" name="J. Bacteriol.">
        <title>Chromosome rearrangement and diversification of Francisella tularensis revealed by the type B (OSU18) genome sequence.</title>
        <authorList>
            <person name="Petrosino J.F."/>
            <person name="Xiang Q."/>
            <person name="Karpathy S.E."/>
            <person name="Jiang H."/>
            <person name="Yerrapragada S."/>
            <person name="Liu Y."/>
            <person name="Gioia J."/>
            <person name="Hemphill L."/>
            <person name="Gonzalez A."/>
            <person name="Raghavan T.M."/>
            <person name="Uzman A."/>
            <person name="Fox G.E."/>
            <person name="Highlander S."/>
            <person name="Reichard M."/>
            <person name="Morton R.J."/>
            <person name="Clinkenbeard K.D."/>
            <person name="Weinstock G.M."/>
        </authorList>
    </citation>
    <scope>NUCLEOTIDE SEQUENCE [LARGE SCALE GENOMIC DNA]</scope>
    <source>
        <strain>OSU18</strain>
    </source>
</reference>
<feature type="chain" id="PRO_1000070374" description="Pyridoxal 5'-phosphate synthase subunit PdxS">
    <location>
        <begin position="1"/>
        <end position="287"/>
    </location>
</feature>
<feature type="active site" description="Schiff-base intermediate with D-ribose 5-phosphate" evidence="1">
    <location>
        <position position="78"/>
    </location>
</feature>
<feature type="binding site" evidence="1">
    <location>
        <position position="21"/>
    </location>
    <ligand>
        <name>D-ribose 5-phosphate</name>
        <dbReference type="ChEBI" id="CHEBI:78346"/>
    </ligand>
</feature>
<feature type="binding site" evidence="1">
    <location>
        <position position="150"/>
    </location>
    <ligand>
        <name>D-ribose 5-phosphate</name>
        <dbReference type="ChEBI" id="CHEBI:78346"/>
    </ligand>
</feature>
<feature type="binding site" evidence="1">
    <location>
        <position position="162"/>
    </location>
    <ligand>
        <name>D-glyceraldehyde 3-phosphate</name>
        <dbReference type="ChEBI" id="CHEBI:59776"/>
    </ligand>
</feature>
<feature type="binding site" evidence="1">
    <location>
        <position position="211"/>
    </location>
    <ligand>
        <name>D-ribose 5-phosphate</name>
        <dbReference type="ChEBI" id="CHEBI:78346"/>
    </ligand>
</feature>
<feature type="binding site" evidence="1">
    <location>
        <begin position="232"/>
        <end position="233"/>
    </location>
    <ligand>
        <name>D-ribose 5-phosphate</name>
        <dbReference type="ChEBI" id="CHEBI:78346"/>
    </ligand>
</feature>
<dbReference type="EC" id="4.3.3.6" evidence="1"/>
<dbReference type="EMBL" id="CP000437">
    <property type="protein sequence ID" value="ABI83302.1"/>
    <property type="molecule type" value="Genomic_DNA"/>
</dbReference>
<dbReference type="RefSeq" id="WP_003016899.1">
    <property type="nucleotide sequence ID" value="NC_017463.1"/>
</dbReference>
<dbReference type="SMR" id="Q0BKT2"/>
<dbReference type="KEGG" id="fth:FTH_1496"/>
<dbReference type="UniPathway" id="UPA00245"/>
<dbReference type="GO" id="GO:0036381">
    <property type="term" value="F:pyridoxal 5'-phosphate synthase (glutamine hydrolysing) activity"/>
    <property type="evidence" value="ECO:0007669"/>
    <property type="project" value="UniProtKB-UniRule"/>
</dbReference>
<dbReference type="GO" id="GO:0006520">
    <property type="term" value="P:amino acid metabolic process"/>
    <property type="evidence" value="ECO:0007669"/>
    <property type="project" value="TreeGrafter"/>
</dbReference>
<dbReference type="GO" id="GO:0042823">
    <property type="term" value="P:pyridoxal phosphate biosynthetic process"/>
    <property type="evidence" value="ECO:0007669"/>
    <property type="project" value="UniProtKB-UniRule"/>
</dbReference>
<dbReference type="GO" id="GO:0008615">
    <property type="term" value="P:pyridoxine biosynthetic process"/>
    <property type="evidence" value="ECO:0007669"/>
    <property type="project" value="TreeGrafter"/>
</dbReference>
<dbReference type="CDD" id="cd04727">
    <property type="entry name" value="pdxS"/>
    <property type="match status" value="1"/>
</dbReference>
<dbReference type="FunFam" id="3.20.20.70:FF:000001">
    <property type="entry name" value="Pyridoxine biosynthesis protein PDX1"/>
    <property type="match status" value="1"/>
</dbReference>
<dbReference type="Gene3D" id="3.20.20.70">
    <property type="entry name" value="Aldolase class I"/>
    <property type="match status" value="1"/>
</dbReference>
<dbReference type="HAMAP" id="MF_01824">
    <property type="entry name" value="PdxS"/>
    <property type="match status" value="1"/>
</dbReference>
<dbReference type="InterPro" id="IPR013785">
    <property type="entry name" value="Aldolase_TIM"/>
</dbReference>
<dbReference type="InterPro" id="IPR001852">
    <property type="entry name" value="PdxS/SNZ"/>
</dbReference>
<dbReference type="InterPro" id="IPR033755">
    <property type="entry name" value="PdxS/SNZ_N"/>
</dbReference>
<dbReference type="InterPro" id="IPR011060">
    <property type="entry name" value="RibuloseP-bd_barrel"/>
</dbReference>
<dbReference type="NCBIfam" id="NF003215">
    <property type="entry name" value="PRK04180.1"/>
    <property type="match status" value="1"/>
</dbReference>
<dbReference type="NCBIfam" id="TIGR00343">
    <property type="entry name" value="pyridoxal 5'-phosphate synthase lyase subunit PdxS"/>
    <property type="match status" value="1"/>
</dbReference>
<dbReference type="PANTHER" id="PTHR31829">
    <property type="entry name" value="PYRIDOXAL 5'-PHOSPHATE SYNTHASE SUBUNIT SNZ1-RELATED"/>
    <property type="match status" value="1"/>
</dbReference>
<dbReference type="PANTHER" id="PTHR31829:SF0">
    <property type="entry name" value="PYRIDOXAL 5'-PHOSPHATE SYNTHASE SUBUNIT SNZ1-RELATED"/>
    <property type="match status" value="1"/>
</dbReference>
<dbReference type="Pfam" id="PF01680">
    <property type="entry name" value="SOR_SNZ"/>
    <property type="match status" value="1"/>
</dbReference>
<dbReference type="PIRSF" id="PIRSF029271">
    <property type="entry name" value="Pdx1"/>
    <property type="match status" value="1"/>
</dbReference>
<dbReference type="SUPFAM" id="SSF51366">
    <property type="entry name" value="Ribulose-phoshate binding barrel"/>
    <property type="match status" value="1"/>
</dbReference>
<dbReference type="PROSITE" id="PS01235">
    <property type="entry name" value="PDXS_SNZ_1"/>
    <property type="match status" value="1"/>
</dbReference>
<dbReference type="PROSITE" id="PS51129">
    <property type="entry name" value="PDXS_SNZ_2"/>
    <property type="match status" value="1"/>
</dbReference>
<organism>
    <name type="scientific">Francisella tularensis subsp. holarctica (strain OSU18)</name>
    <dbReference type="NCBI Taxonomy" id="393011"/>
    <lineage>
        <taxon>Bacteria</taxon>
        <taxon>Pseudomonadati</taxon>
        <taxon>Pseudomonadota</taxon>
        <taxon>Gammaproteobacteria</taxon>
        <taxon>Thiotrichales</taxon>
        <taxon>Francisellaceae</taxon>
        <taxon>Francisella</taxon>
    </lineage>
</organism>